<reference key="1">
    <citation type="journal article" date="2009" name="J. Bacteriol.">
        <title>Genomic sequencing reveals regulatory mutations and recombinational events in the widely used MC4100 lineage of Escherichia coli K-12.</title>
        <authorList>
            <person name="Ferenci T."/>
            <person name="Zhou Z."/>
            <person name="Betteridge T."/>
            <person name="Ren Y."/>
            <person name="Liu Y."/>
            <person name="Feng L."/>
            <person name="Reeves P.R."/>
            <person name="Wang L."/>
        </authorList>
    </citation>
    <scope>NUCLEOTIDE SEQUENCE [LARGE SCALE GENOMIC DNA]</scope>
    <source>
        <strain>K12 / MC4100 / BW2952</strain>
    </source>
</reference>
<proteinExistence type="inferred from homology"/>
<organism>
    <name type="scientific">Escherichia coli (strain K12 / MC4100 / BW2952)</name>
    <dbReference type="NCBI Taxonomy" id="595496"/>
    <lineage>
        <taxon>Bacteria</taxon>
        <taxon>Pseudomonadati</taxon>
        <taxon>Pseudomonadota</taxon>
        <taxon>Gammaproteobacteria</taxon>
        <taxon>Enterobacterales</taxon>
        <taxon>Enterobacteriaceae</taxon>
        <taxon>Escherichia</taxon>
    </lineage>
</organism>
<comment type="function">
    <text evidence="1">Necessary for the succinyl substitution of periplasmic glucans. Could catalyze the transfer of succinyl residues from the cytoplasmic side of the membrane to the nascent glucan backbones on the periplasmic side of the membrane.</text>
</comment>
<comment type="pathway">
    <text evidence="1">Glycan metabolism; osmoregulated periplasmic glucan (OPG) biosynthesis.</text>
</comment>
<comment type="subcellular location">
    <subcellularLocation>
        <location evidence="1">Cell membrane</location>
        <topology evidence="1">Multi-pass membrane protein</topology>
    </subcellularLocation>
</comment>
<comment type="similarity">
    <text evidence="1">Belongs to the acyltransferase 3 family. OpgC subfamily.</text>
</comment>
<accession>C4ZRY8</accession>
<protein>
    <recommendedName>
        <fullName evidence="1">Glucans biosynthesis protein C</fullName>
        <ecNumber evidence="1">2.1.-.-</ecNumber>
    </recommendedName>
</protein>
<gene>
    <name evidence="1" type="primary">mdoC</name>
    <name evidence="1" type="synonym">opgC</name>
    <name type="ordered locus">BWG_0896</name>
</gene>
<sequence length="385" mass="44690">MNPVPAQREYFLDSIRAWLMLLGIPFHISLIYSSHTWHVNSAESSLWLTLFNDFIHSFRMQVFFVISGYFSYMLFLRYPLKKWWKVRVERVGIPMLTAIPLLTLPQFIMLQYVKGKAESWPGLSLYDKYNTLAWELISHLWFLLVLVVMTTLCVWIFKRIRNNLENSDKTNKKFSMVKLSVIFLCLGIGYAVIRRTIFIVYPPILSNGMFNFIVMQTLFYLPFFILGALAFIFPHLKALFTTPSRGCTLAAALAFVAYLLNQRYGSGDAWMYETESVITMVLGLWMVNVVFSFGHRLLNFQSARVTYFVNASLFIYLVHHPLTLFFGAYITPHITSNWLGFLCGLIFVVGIAIILYEIHLRIPLLKFLFSGKPVVKRENDKAPAR</sequence>
<evidence type="ECO:0000255" key="1">
    <source>
        <dbReference type="HAMAP-Rule" id="MF_01066"/>
    </source>
</evidence>
<feature type="chain" id="PRO_1000213465" description="Glucans biosynthesis protein C">
    <location>
        <begin position="1"/>
        <end position="385"/>
    </location>
</feature>
<feature type="transmembrane region" description="Helical" evidence="1">
    <location>
        <begin position="17"/>
        <end position="37"/>
    </location>
</feature>
<feature type="transmembrane region" description="Helical" evidence="1">
    <location>
        <begin position="60"/>
        <end position="80"/>
    </location>
</feature>
<feature type="transmembrane region" description="Helical" evidence="1">
    <location>
        <begin position="91"/>
        <end position="111"/>
    </location>
</feature>
<feature type="transmembrane region" description="Helical" evidence="1">
    <location>
        <begin position="137"/>
        <end position="157"/>
    </location>
</feature>
<feature type="transmembrane region" description="Helical" evidence="1">
    <location>
        <begin position="173"/>
        <end position="193"/>
    </location>
</feature>
<feature type="transmembrane region" description="Helical" evidence="1">
    <location>
        <begin position="212"/>
        <end position="232"/>
    </location>
</feature>
<feature type="transmembrane region" description="Helical" evidence="1">
    <location>
        <begin position="239"/>
        <end position="259"/>
    </location>
</feature>
<feature type="transmembrane region" description="Helical" evidence="1">
    <location>
        <begin position="274"/>
        <end position="294"/>
    </location>
</feature>
<feature type="transmembrane region" description="Helical" evidence="1">
    <location>
        <begin position="311"/>
        <end position="331"/>
    </location>
</feature>
<feature type="transmembrane region" description="Helical" evidence="1">
    <location>
        <begin position="338"/>
        <end position="358"/>
    </location>
</feature>
<name>OPGC_ECOBW</name>
<keyword id="KW-0012">Acyltransferase</keyword>
<keyword id="KW-1003">Cell membrane</keyword>
<keyword id="KW-0472">Membrane</keyword>
<keyword id="KW-0808">Transferase</keyword>
<keyword id="KW-0812">Transmembrane</keyword>
<keyword id="KW-1133">Transmembrane helix</keyword>
<dbReference type="EC" id="2.1.-.-" evidence="1"/>
<dbReference type="EMBL" id="CP001396">
    <property type="protein sequence ID" value="ACR63741.1"/>
    <property type="molecule type" value="Genomic_DNA"/>
</dbReference>
<dbReference type="RefSeq" id="WP_001070375.1">
    <property type="nucleotide sequence ID" value="NC_012759.1"/>
</dbReference>
<dbReference type="GeneID" id="75203635"/>
<dbReference type="KEGG" id="ebw:BWG_0896"/>
<dbReference type="HOGENOM" id="CLU_036182_2_0_6"/>
<dbReference type="UniPathway" id="UPA00637"/>
<dbReference type="GO" id="GO:0005886">
    <property type="term" value="C:plasma membrane"/>
    <property type="evidence" value="ECO:0007669"/>
    <property type="project" value="UniProtKB-SubCell"/>
</dbReference>
<dbReference type="GO" id="GO:0016747">
    <property type="term" value="F:acyltransferase activity, transferring groups other than amino-acyl groups"/>
    <property type="evidence" value="ECO:0007669"/>
    <property type="project" value="InterPro"/>
</dbReference>
<dbReference type="GO" id="GO:0016741">
    <property type="term" value="F:transferase activity, transferring one-carbon groups"/>
    <property type="evidence" value="ECO:0007669"/>
    <property type="project" value="UniProtKB-UniRule"/>
</dbReference>
<dbReference type="GO" id="GO:0009250">
    <property type="term" value="P:glucan biosynthetic process"/>
    <property type="evidence" value="ECO:0007669"/>
    <property type="project" value="UniProtKB-UniRule"/>
</dbReference>
<dbReference type="HAMAP" id="MF_01066">
    <property type="entry name" value="MdoC_OpgC"/>
    <property type="match status" value="1"/>
</dbReference>
<dbReference type="InterPro" id="IPR002656">
    <property type="entry name" value="Acyl_transf_3_dom"/>
</dbReference>
<dbReference type="InterPro" id="IPR050623">
    <property type="entry name" value="Glucan_succinyl_AcylTrfase"/>
</dbReference>
<dbReference type="InterPro" id="IPR023723">
    <property type="entry name" value="Glucans_biosynth_C"/>
</dbReference>
<dbReference type="NCBIfam" id="NF003014">
    <property type="entry name" value="PRK03854.1"/>
    <property type="match status" value="1"/>
</dbReference>
<dbReference type="PANTHER" id="PTHR36927">
    <property type="entry name" value="BLR4337 PROTEIN"/>
    <property type="match status" value="1"/>
</dbReference>
<dbReference type="PANTHER" id="PTHR36927:SF3">
    <property type="entry name" value="GLUCANS BIOSYNTHESIS PROTEIN C"/>
    <property type="match status" value="1"/>
</dbReference>
<dbReference type="Pfam" id="PF01757">
    <property type="entry name" value="Acyl_transf_3"/>
    <property type="match status" value="1"/>
</dbReference>